<proteinExistence type="inferred from homology"/>
<keyword id="KW-0001">2Fe-2S</keyword>
<keyword id="KW-0004">4Fe-4S</keyword>
<keyword id="KW-0093">Biotin biosynthesis</keyword>
<keyword id="KW-0408">Iron</keyword>
<keyword id="KW-0411">Iron-sulfur</keyword>
<keyword id="KW-0479">Metal-binding</keyword>
<keyword id="KW-0949">S-adenosyl-L-methionine</keyword>
<keyword id="KW-0808">Transferase</keyword>
<organism>
    <name type="scientific">Staphylococcus aureus (strain MRSA252)</name>
    <dbReference type="NCBI Taxonomy" id="282458"/>
    <lineage>
        <taxon>Bacteria</taxon>
        <taxon>Bacillati</taxon>
        <taxon>Bacillota</taxon>
        <taxon>Bacilli</taxon>
        <taxon>Bacillales</taxon>
        <taxon>Staphylococcaceae</taxon>
        <taxon>Staphylococcus</taxon>
    </lineage>
</organism>
<sequence>MNLAKRILQGEQLTKETVLKIYEDTNIDTLDLLNEAYILRKHYFGKKVKLNMILNAKSGICPENCGYCGQSREIKQKQRYALIPEEQIIDGAKVAHDNHIGTYCIVMSGRGPSDKEVDHISNTVRTIKSQHPQLKICACLGLTNDEQAKKLKSAGVDRYNHNINTSENYHDNVVTTHSYKDRTDTIELMKANNISPCSGVICGMGESNQDIVDMAFALKEMDADSIPINFLHPIKGTKFGSMDDLTPMKCLRIVALFRLINPTKEIRIAGGREVNLRSLQPLALKAANSIFVGDYLITGGQPNQLDYDMINDLGFEIDYDTCENKENKNDVSRAN</sequence>
<accession>Q6GE08</accession>
<reference key="1">
    <citation type="journal article" date="2004" name="Proc. Natl. Acad. Sci. U.S.A.">
        <title>Complete genomes of two clinical Staphylococcus aureus strains: evidence for the rapid evolution of virulence and drug resistance.</title>
        <authorList>
            <person name="Holden M.T.G."/>
            <person name="Feil E.J."/>
            <person name="Lindsay J.A."/>
            <person name="Peacock S.J."/>
            <person name="Day N.P.J."/>
            <person name="Enright M.C."/>
            <person name="Foster T.J."/>
            <person name="Moore C.E."/>
            <person name="Hurst L."/>
            <person name="Atkin R."/>
            <person name="Barron A."/>
            <person name="Bason N."/>
            <person name="Bentley S.D."/>
            <person name="Chillingworth C."/>
            <person name="Chillingworth T."/>
            <person name="Churcher C."/>
            <person name="Clark L."/>
            <person name="Corton C."/>
            <person name="Cronin A."/>
            <person name="Doggett J."/>
            <person name="Dowd L."/>
            <person name="Feltwell T."/>
            <person name="Hance Z."/>
            <person name="Harris B."/>
            <person name="Hauser H."/>
            <person name="Holroyd S."/>
            <person name="Jagels K."/>
            <person name="James K.D."/>
            <person name="Lennard N."/>
            <person name="Line A."/>
            <person name="Mayes R."/>
            <person name="Moule S."/>
            <person name="Mungall K."/>
            <person name="Ormond D."/>
            <person name="Quail M.A."/>
            <person name="Rabbinowitsch E."/>
            <person name="Rutherford K.M."/>
            <person name="Sanders M."/>
            <person name="Sharp S."/>
            <person name="Simmonds M."/>
            <person name="Stevens K."/>
            <person name="Whitehead S."/>
            <person name="Barrell B.G."/>
            <person name="Spratt B.G."/>
            <person name="Parkhill J."/>
        </authorList>
    </citation>
    <scope>NUCLEOTIDE SEQUENCE [LARGE SCALE GENOMIC DNA]</scope>
    <source>
        <strain>MRSA252</strain>
    </source>
</reference>
<evidence type="ECO:0000255" key="1">
    <source>
        <dbReference type="HAMAP-Rule" id="MF_01694"/>
    </source>
</evidence>
<evidence type="ECO:0000255" key="2">
    <source>
        <dbReference type="PROSITE-ProRule" id="PRU01266"/>
    </source>
</evidence>
<comment type="function">
    <text evidence="1">Catalyzes the conversion of dethiobiotin (DTB) to biotin by the insertion of a sulfur atom into dethiobiotin via a radical-based mechanism.</text>
</comment>
<comment type="catalytic activity">
    <reaction evidence="1">
        <text>(4R,5S)-dethiobiotin + (sulfur carrier)-SH + 2 reduced [2Fe-2S]-[ferredoxin] + 2 S-adenosyl-L-methionine = (sulfur carrier)-H + biotin + 2 5'-deoxyadenosine + 2 L-methionine + 2 oxidized [2Fe-2S]-[ferredoxin]</text>
        <dbReference type="Rhea" id="RHEA:22060"/>
        <dbReference type="Rhea" id="RHEA-COMP:10000"/>
        <dbReference type="Rhea" id="RHEA-COMP:10001"/>
        <dbReference type="Rhea" id="RHEA-COMP:14737"/>
        <dbReference type="Rhea" id="RHEA-COMP:14739"/>
        <dbReference type="ChEBI" id="CHEBI:17319"/>
        <dbReference type="ChEBI" id="CHEBI:29917"/>
        <dbReference type="ChEBI" id="CHEBI:33737"/>
        <dbReference type="ChEBI" id="CHEBI:33738"/>
        <dbReference type="ChEBI" id="CHEBI:57586"/>
        <dbReference type="ChEBI" id="CHEBI:57844"/>
        <dbReference type="ChEBI" id="CHEBI:59789"/>
        <dbReference type="ChEBI" id="CHEBI:64428"/>
        <dbReference type="ChEBI" id="CHEBI:149473"/>
        <dbReference type="EC" id="2.8.1.6"/>
    </reaction>
</comment>
<comment type="cofactor">
    <cofactor evidence="1">
        <name>[4Fe-4S] cluster</name>
        <dbReference type="ChEBI" id="CHEBI:49883"/>
    </cofactor>
    <text evidence="1">Binds 1 [4Fe-4S] cluster. The cluster is coordinated with 3 cysteines and an exchangeable S-adenosyl-L-methionine.</text>
</comment>
<comment type="cofactor">
    <cofactor evidence="1">
        <name>[2Fe-2S] cluster</name>
        <dbReference type="ChEBI" id="CHEBI:190135"/>
    </cofactor>
    <text evidence="1">Binds 1 [2Fe-2S] cluster. The cluster is coordinated with 3 cysteines and 1 arginine.</text>
</comment>
<comment type="pathway">
    <text evidence="1">Cofactor biosynthesis; biotin biosynthesis; biotin from 7,8-diaminononanoate: step 2/2.</text>
</comment>
<comment type="subunit">
    <text evidence="1">Homodimer.</text>
</comment>
<comment type="similarity">
    <text evidence="1">Belongs to the radical SAM superfamily. Biotin synthase family.</text>
</comment>
<gene>
    <name evidence="1" type="primary">bioB</name>
    <name type="ordered locus">SAR2515</name>
</gene>
<name>BIOB_STAAR</name>
<protein>
    <recommendedName>
        <fullName evidence="1">Biotin synthase</fullName>
        <ecNumber evidence="1">2.8.1.6</ecNumber>
    </recommendedName>
</protein>
<feature type="chain" id="PRO_0000381652" description="Biotin synthase">
    <location>
        <begin position="1"/>
        <end position="335"/>
    </location>
</feature>
<feature type="domain" description="Radical SAM core" evidence="2">
    <location>
        <begin position="43"/>
        <end position="269"/>
    </location>
</feature>
<feature type="binding site" evidence="1">
    <location>
        <position position="61"/>
    </location>
    <ligand>
        <name>[4Fe-4S] cluster</name>
        <dbReference type="ChEBI" id="CHEBI:49883"/>
        <note>4Fe-4S-S-AdoMet</note>
    </ligand>
</feature>
<feature type="binding site" evidence="1">
    <location>
        <position position="65"/>
    </location>
    <ligand>
        <name>[4Fe-4S] cluster</name>
        <dbReference type="ChEBI" id="CHEBI:49883"/>
        <note>4Fe-4S-S-AdoMet</note>
    </ligand>
</feature>
<feature type="binding site" evidence="1">
    <location>
        <position position="68"/>
    </location>
    <ligand>
        <name>[4Fe-4S] cluster</name>
        <dbReference type="ChEBI" id="CHEBI:49883"/>
        <note>4Fe-4S-S-AdoMet</note>
    </ligand>
</feature>
<feature type="binding site" evidence="1">
    <location>
        <position position="104"/>
    </location>
    <ligand>
        <name>[2Fe-2S] cluster</name>
        <dbReference type="ChEBI" id="CHEBI:190135"/>
    </ligand>
</feature>
<feature type="binding site" evidence="1">
    <location>
        <position position="137"/>
    </location>
    <ligand>
        <name>[2Fe-2S] cluster</name>
        <dbReference type="ChEBI" id="CHEBI:190135"/>
    </ligand>
</feature>
<feature type="binding site" evidence="1">
    <location>
        <position position="197"/>
    </location>
    <ligand>
        <name>[2Fe-2S] cluster</name>
        <dbReference type="ChEBI" id="CHEBI:190135"/>
    </ligand>
</feature>
<feature type="binding site" evidence="1">
    <location>
        <position position="267"/>
    </location>
    <ligand>
        <name>[2Fe-2S] cluster</name>
        <dbReference type="ChEBI" id="CHEBI:190135"/>
    </ligand>
</feature>
<dbReference type="EC" id="2.8.1.6" evidence="1"/>
<dbReference type="EMBL" id="BX571856">
    <property type="protein sequence ID" value="CAG41495.1"/>
    <property type="molecule type" value="Genomic_DNA"/>
</dbReference>
<dbReference type="RefSeq" id="WP_001046650.1">
    <property type="nucleotide sequence ID" value="NC_002952.2"/>
</dbReference>
<dbReference type="SMR" id="Q6GE08"/>
<dbReference type="KEGG" id="sar:SAR2515"/>
<dbReference type="HOGENOM" id="CLU_033172_2_1_9"/>
<dbReference type="UniPathway" id="UPA00078">
    <property type="reaction ID" value="UER00162"/>
</dbReference>
<dbReference type="Proteomes" id="UP000000596">
    <property type="component" value="Chromosome"/>
</dbReference>
<dbReference type="GO" id="GO:0051537">
    <property type="term" value="F:2 iron, 2 sulfur cluster binding"/>
    <property type="evidence" value="ECO:0007669"/>
    <property type="project" value="UniProtKB-KW"/>
</dbReference>
<dbReference type="GO" id="GO:0051539">
    <property type="term" value="F:4 iron, 4 sulfur cluster binding"/>
    <property type="evidence" value="ECO:0007669"/>
    <property type="project" value="UniProtKB-KW"/>
</dbReference>
<dbReference type="GO" id="GO:0004076">
    <property type="term" value="F:biotin synthase activity"/>
    <property type="evidence" value="ECO:0007669"/>
    <property type="project" value="UniProtKB-UniRule"/>
</dbReference>
<dbReference type="GO" id="GO:0005506">
    <property type="term" value="F:iron ion binding"/>
    <property type="evidence" value="ECO:0007669"/>
    <property type="project" value="UniProtKB-UniRule"/>
</dbReference>
<dbReference type="GO" id="GO:0009102">
    <property type="term" value="P:biotin biosynthetic process"/>
    <property type="evidence" value="ECO:0007669"/>
    <property type="project" value="UniProtKB-UniRule"/>
</dbReference>
<dbReference type="CDD" id="cd01335">
    <property type="entry name" value="Radical_SAM"/>
    <property type="match status" value="1"/>
</dbReference>
<dbReference type="FunFam" id="3.20.20.70:FF:000026">
    <property type="entry name" value="Biotin synthase"/>
    <property type="match status" value="1"/>
</dbReference>
<dbReference type="Gene3D" id="3.20.20.70">
    <property type="entry name" value="Aldolase class I"/>
    <property type="match status" value="1"/>
</dbReference>
<dbReference type="HAMAP" id="MF_01694">
    <property type="entry name" value="BioB"/>
    <property type="match status" value="1"/>
</dbReference>
<dbReference type="InterPro" id="IPR013785">
    <property type="entry name" value="Aldolase_TIM"/>
</dbReference>
<dbReference type="InterPro" id="IPR010722">
    <property type="entry name" value="BATS_dom"/>
</dbReference>
<dbReference type="InterPro" id="IPR002684">
    <property type="entry name" value="Biotin_synth/BioAB"/>
</dbReference>
<dbReference type="InterPro" id="IPR024177">
    <property type="entry name" value="Biotin_synthase"/>
</dbReference>
<dbReference type="InterPro" id="IPR006638">
    <property type="entry name" value="Elp3/MiaA/NifB-like_rSAM"/>
</dbReference>
<dbReference type="InterPro" id="IPR007197">
    <property type="entry name" value="rSAM"/>
</dbReference>
<dbReference type="NCBIfam" id="TIGR00433">
    <property type="entry name" value="bioB"/>
    <property type="match status" value="1"/>
</dbReference>
<dbReference type="PANTHER" id="PTHR22976">
    <property type="entry name" value="BIOTIN SYNTHASE"/>
    <property type="match status" value="1"/>
</dbReference>
<dbReference type="PANTHER" id="PTHR22976:SF2">
    <property type="entry name" value="BIOTIN SYNTHASE, MITOCHONDRIAL"/>
    <property type="match status" value="1"/>
</dbReference>
<dbReference type="Pfam" id="PF06968">
    <property type="entry name" value="BATS"/>
    <property type="match status" value="1"/>
</dbReference>
<dbReference type="Pfam" id="PF04055">
    <property type="entry name" value="Radical_SAM"/>
    <property type="match status" value="1"/>
</dbReference>
<dbReference type="PIRSF" id="PIRSF001619">
    <property type="entry name" value="Biotin_synth"/>
    <property type="match status" value="1"/>
</dbReference>
<dbReference type="SFLD" id="SFLDG01278">
    <property type="entry name" value="biotin_synthase_like"/>
    <property type="match status" value="1"/>
</dbReference>
<dbReference type="SFLD" id="SFLDS00029">
    <property type="entry name" value="Radical_SAM"/>
    <property type="match status" value="1"/>
</dbReference>
<dbReference type="SMART" id="SM00876">
    <property type="entry name" value="BATS"/>
    <property type="match status" value="1"/>
</dbReference>
<dbReference type="SMART" id="SM00729">
    <property type="entry name" value="Elp3"/>
    <property type="match status" value="1"/>
</dbReference>
<dbReference type="SUPFAM" id="SSF102114">
    <property type="entry name" value="Radical SAM enzymes"/>
    <property type="match status" value="1"/>
</dbReference>
<dbReference type="PROSITE" id="PS51918">
    <property type="entry name" value="RADICAL_SAM"/>
    <property type="match status" value="1"/>
</dbReference>